<keyword id="KW-1003">Cell membrane</keyword>
<keyword id="KW-0217">Developmental protein</keyword>
<keyword id="KW-0325">Glycoprotein</keyword>
<keyword id="KW-0341">Growth regulation</keyword>
<keyword id="KW-0378">Hydrolase</keyword>
<keyword id="KW-0472">Membrane</keyword>
<keyword id="KW-0479">Metal-binding</keyword>
<keyword id="KW-0482">Metalloprotease</keyword>
<keyword id="KW-0645">Protease</keyword>
<keyword id="KW-1185">Reference proteome</keyword>
<keyword id="KW-0735">Signal-anchor</keyword>
<keyword id="KW-0812">Transmembrane</keyword>
<keyword id="KW-1133">Transmembrane helix</keyword>
<keyword id="KW-0862">Zinc</keyword>
<feature type="chain" id="PRO_0000439196" description="Probable glutamate carboxypeptidase VP8">
    <location>
        <begin position="1"/>
        <end position="713"/>
    </location>
</feature>
<feature type="topological domain" description="Cytoplasmic" evidence="6">
    <location>
        <begin position="1"/>
        <end position="10"/>
    </location>
</feature>
<feature type="transmembrane region" description="Helical; Signal-anchor for type II membrane protein" evidence="2">
    <location>
        <begin position="11"/>
        <end position="31"/>
    </location>
</feature>
<feature type="topological domain" description="Extracellular" evidence="6">
    <location>
        <begin position="32"/>
        <end position="713"/>
    </location>
</feature>
<feature type="region of interest" description="Catalytic" evidence="6">
    <location>
        <begin position="245"/>
        <end position="539"/>
    </location>
</feature>
<feature type="active site" description="Nucleophile" evidence="1">
    <location>
        <position position="392"/>
    </location>
</feature>
<feature type="binding site" evidence="1">
    <location>
        <position position="345"/>
    </location>
    <ligand>
        <name>Zn(2+)</name>
        <dbReference type="ChEBI" id="CHEBI:29105"/>
        <label>1</label>
        <note>catalytic</note>
    </ligand>
</feature>
<feature type="binding site" evidence="1">
    <location>
        <position position="355"/>
    </location>
    <ligand>
        <name>Zn(2+)</name>
        <dbReference type="ChEBI" id="CHEBI:29105"/>
        <label>1</label>
        <note>catalytic</note>
    </ligand>
</feature>
<feature type="binding site" evidence="1">
    <location>
        <position position="355"/>
    </location>
    <ligand>
        <name>Zn(2+)</name>
        <dbReference type="ChEBI" id="CHEBI:29105"/>
        <label>2</label>
    </ligand>
</feature>
<feature type="binding site" evidence="1">
    <location>
        <position position="393"/>
    </location>
    <ligand>
        <name>Zn(2+)</name>
        <dbReference type="ChEBI" id="CHEBI:29105"/>
        <label>2</label>
    </ligand>
</feature>
<feature type="binding site" evidence="1">
    <location>
        <position position="421"/>
    </location>
    <ligand>
        <name>Zn(2+)</name>
        <dbReference type="ChEBI" id="CHEBI:29105"/>
        <label>1</label>
        <note>catalytic</note>
    </ligand>
</feature>
<feature type="binding site" evidence="1">
    <location>
        <position position="505"/>
    </location>
    <ligand>
        <name>Zn(2+)</name>
        <dbReference type="ChEBI" id="CHEBI:29105"/>
        <label>2</label>
    </ligand>
</feature>
<feature type="glycosylation site" description="N-linked (GlcNAc...) asparagine" evidence="3">
    <location>
        <position position="66"/>
    </location>
</feature>
<feature type="glycosylation site" description="N-linked (GlcNAc...) asparagine" evidence="3">
    <location>
        <position position="311"/>
    </location>
</feature>
<feature type="glycosylation site" description="N-linked (GlcNAc...) asparagine" evidence="3">
    <location>
        <position position="667"/>
    </location>
</feature>
<feature type="glycosylation site" description="N-linked (GlcNAc...) asparagine" evidence="3">
    <location>
        <position position="706"/>
    </location>
</feature>
<feature type="sequence conflict" description="In Ref. 1; ACA62934." evidence="6" ref="1">
    <original>L</original>
    <variation>I</variation>
    <location>
        <position position="25"/>
    </location>
</feature>
<feature type="sequence conflict" description="In Ref. 1; ACA62934." evidence="6" ref="1">
    <original>S</original>
    <variation>G</variation>
    <location>
        <position position="46"/>
    </location>
</feature>
<feature type="sequence conflict" description="In Ref. 1; ACA62934." evidence="6" ref="1">
    <original>L</original>
    <variation>V</variation>
    <location>
        <position position="303"/>
    </location>
</feature>
<name>VP8_MAIZE</name>
<organism>
    <name type="scientific">Zea mays</name>
    <name type="common">Maize</name>
    <dbReference type="NCBI Taxonomy" id="4577"/>
    <lineage>
        <taxon>Eukaryota</taxon>
        <taxon>Viridiplantae</taxon>
        <taxon>Streptophyta</taxon>
        <taxon>Embryophyta</taxon>
        <taxon>Tracheophyta</taxon>
        <taxon>Spermatophyta</taxon>
        <taxon>Magnoliopsida</taxon>
        <taxon>Liliopsida</taxon>
        <taxon>Poales</taxon>
        <taxon>Poaceae</taxon>
        <taxon>PACMAD clade</taxon>
        <taxon>Panicoideae</taxon>
        <taxon>Andropogonodae</taxon>
        <taxon>Andropogoneae</taxon>
        <taxon>Tripsacinae</taxon>
        <taxon>Zea</taxon>
    </lineage>
</organism>
<sequence>MPHSVLARLPPGSVRLVAAFGLLLLVSLLVLHRRPGRPHVAAAAASDRLTDPSRSRLFLSQSPGANASIAADLRALTAGPHLAGTPASAGAAAHVLARLRAAGLQTLTREYEPLLSYPGHASLALLRPDGSLLARLSLEEPADEGRRVVPPYHAYAPSGGAVAEAVFVNLGREEDYVVLERLGVGVRGRVAVARRGGGYRGGVVARAADKGAVAVLIAGNADGGVERGVVLLGGPGDPLTPGWAATSGAERLKFDDKAVKQRFPSIPSMPVSAKTAAAIIRSLGGPAIPAEWKDGLGVDTGGLGPGPTLVNFTYQEDRKFYKIRDIFGIIKGQEEPDRYVILGNHRDAWTYGAVDPNSGTAALLDIARRLGIMLQSGWKPRRSIILCSWDGEEFGMIGSTEWVEDNLEDLHSKAVAYLNVDCAVQGVGFFAGSTPQLDKLLVDITRQVRDPDVTGKMVHDTWNEMSGGIKIERLARTDSDFAPFLHHAGIPSVDLYYGEEFPGYHTALDTYNWMEKHGDPFFLRHLAITEIWGLLALRLANDPVLPFDYQAYTSQLQEHIKTLSALTSNGHAVNLMNGCVNDLSGAAMEVLKEMKKLQQMDLYDEHARMRRRLLNDRLLLAERSFLQPEGLQGRGWFKHLLYSPPEDYESKLSFFPGIADAISRSANLSDKEQEVAMQHEVWKVCRAIQRAASVLRGEFSEQKPTNFSSLVTP</sequence>
<comment type="function">
    <text evidence="4">Involved in the regulation of meristem development and seed maturation processes. Mediates regulation of embryonic regulatory genes and genes controlling abscisic acid (ABA) biosynthesis and turnover in developing seeds. May be required for the synthesis of small signaling molecules that integrates meristem and embryo formation in seeds.</text>
</comment>
<comment type="catalytic activity">
    <reaction evidence="6">
        <text>Release of an unsubstituted, C-terminal glutamyl residue, typically from Ac-Asp-Glu or folylpoly-gamma-glutamates.</text>
        <dbReference type="EC" id="3.4.17.21"/>
    </reaction>
</comment>
<comment type="cofactor">
    <cofactor evidence="1">
        <name>Zn(2+)</name>
        <dbReference type="ChEBI" id="CHEBI:29105"/>
    </cofactor>
    <text evidence="1">Binds 2 Zn(2+) ions per subunit.</text>
</comment>
<comment type="subcellular location">
    <subcellularLocation>
        <location evidence="2">Cell membrane</location>
        <topology evidence="2">Single-pass type II membrane protein</topology>
    </subcellularLocation>
</comment>
<comment type="disruption phenotype">
    <text evidence="4">Altered meristem development. Altered developmental gene expression in meristem and non-meristem tissues of the embryo. Altered pattern of aleurone differentiation in the abgerminal side of the endosperm.</text>
</comment>
<comment type="similarity">
    <text evidence="6">Belongs to the peptidase M28 family. M28B subfamily.</text>
</comment>
<reference key="1">
    <citation type="journal article" date="2008" name="Plant Physiol.">
        <title>The maize Viviparous8 locus, encoding a putative ALTERED MERISTEM PROGRAM1-like peptidase, regulates abscisic acid accumulation and coordinates embryo and endosperm development.</title>
        <authorList>
            <person name="Suzuki M."/>
            <person name="Latshaw S."/>
            <person name="Sato Y."/>
            <person name="Settles A.M."/>
            <person name="Koch K.E."/>
            <person name="Hannah L.C."/>
            <person name="Kojima M."/>
            <person name="Sakakibara H."/>
            <person name="McCarty D.R."/>
        </authorList>
    </citation>
    <scope>NUCLEOTIDE SEQUENCE [MRNA]</scope>
    <scope>FUNCTION</scope>
    <scope>TISSUE SPECIFICITY</scope>
    <scope>DISRUPTION PHENOTYPE</scope>
    <source>
        <strain>cv. Wisconsin 22</strain>
    </source>
</reference>
<reference key="2">
    <citation type="journal article" date="2009" name="Science">
        <title>The B73 maize genome: complexity, diversity, and dynamics.</title>
        <authorList>
            <person name="Schnable P.S."/>
            <person name="Ware D."/>
            <person name="Fulton R.S."/>
            <person name="Stein J.C."/>
            <person name="Wei F."/>
            <person name="Pasternak S."/>
            <person name="Liang C."/>
            <person name="Zhang J."/>
            <person name="Fulton L."/>
            <person name="Graves T.A."/>
            <person name="Minx P."/>
            <person name="Reily A.D."/>
            <person name="Courtney L."/>
            <person name="Kruchowski S.S."/>
            <person name="Tomlinson C."/>
            <person name="Strong C."/>
            <person name="Delehaunty K."/>
            <person name="Fronick C."/>
            <person name="Courtney B."/>
            <person name="Rock S.M."/>
            <person name="Belter E."/>
            <person name="Du F."/>
            <person name="Kim K."/>
            <person name="Abbott R.M."/>
            <person name="Cotton M."/>
            <person name="Levy A."/>
            <person name="Marchetto P."/>
            <person name="Ochoa K."/>
            <person name="Jackson S.M."/>
            <person name="Gillam B."/>
            <person name="Chen W."/>
            <person name="Yan L."/>
            <person name="Higginbotham J."/>
            <person name="Cardenas M."/>
            <person name="Waligorski J."/>
            <person name="Applebaum E."/>
            <person name="Phelps L."/>
            <person name="Falcone J."/>
            <person name="Kanchi K."/>
            <person name="Thane T."/>
            <person name="Scimone A."/>
            <person name="Thane N."/>
            <person name="Henke J."/>
            <person name="Wang T."/>
            <person name="Ruppert J."/>
            <person name="Shah N."/>
            <person name="Rotter K."/>
            <person name="Hodges J."/>
            <person name="Ingenthron E."/>
            <person name="Cordes M."/>
            <person name="Kohlberg S."/>
            <person name="Sgro J."/>
            <person name="Delgado B."/>
            <person name="Mead K."/>
            <person name="Chinwalla A."/>
            <person name="Leonard S."/>
            <person name="Crouse K."/>
            <person name="Collura K."/>
            <person name="Kudrna D."/>
            <person name="Currie J."/>
            <person name="He R."/>
            <person name="Angelova A."/>
            <person name="Rajasekar S."/>
            <person name="Mueller T."/>
            <person name="Lomeli R."/>
            <person name="Scara G."/>
            <person name="Ko A."/>
            <person name="Delaney K."/>
            <person name="Wissotski M."/>
            <person name="Lopez G."/>
            <person name="Campos D."/>
            <person name="Braidotti M."/>
            <person name="Ashley E."/>
            <person name="Golser W."/>
            <person name="Kim H."/>
            <person name="Lee S."/>
            <person name="Lin J."/>
            <person name="Dujmic Z."/>
            <person name="Kim W."/>
            <person name="Talag J."/>
            <person name="Zuccolo A."/>
            <person name="Fan C."/>
            <person name="Sebastian A."/>
            <person name="Kramer M."/>
            <person name="Spiegel L."/>
            <person name="Nascimento L."/>
            <person name="Zutavern T."/>
            <person name="Miller B."/>
            <person name="Ambroise C."/>
            <person name="Muller S."/>
            <person name="Spooner W."/>
            <person name="Narechania A."/>
            <person name="Ren L."/>
            <person name="Wei S."/>
            <person name="Kumari S."/>
            <person name="Faga B."/>
            <person name="Levy M.J."/>
            <person name="McMahan L."/>
            <person name="Van Buren P."/>
            <person name="Vaughn M.W."/>
            <person name="Ying K."/>
            <person name="Yeh C.-T."/>
            <person name="Emrich S.J."/>
            <person name="Jia Y."/>
            <person name="Kalyanaraman A."/>
            <person name="Hsia A.-P."/>
            <person name="Barbazuk W.B."/>
            <person name="Baucom R.S."/>
            <person name="Brutnell T.P."/>
            <person name="Carpita N.C."/>
            <person name="Chaparro C."/>
            <person name="Chia J.-M."/>
            <person name="Deragon J.-M."/>
            <person name="Estill J.C."/>
            <person name="Fu Y."/>
            <person name="Jeddeloh J.A."/>
            <person name="Han Y."/>
            <person name="Lee H."/>
            <person name="Li P."/>
            <person name="Lisch D.R."/>
            <person name="Liu S."/>
            <person name="Liu Z."/>
            <person name="Nagel D.H."/>
            <person name="McCann M.C."/>
            <person name="SanMiguel P."/>
            <person name="Myers A.M."/>
            <person name="Nettleton D."/>
            <person name="Nguyen J."/>
            <person name="Penning B.W."/>
            <person name="Ponnala L."/>
            <person name="Schneider K.L."/>
            <person name="Schwartz D.C."/>
            <person name="Sharma A."/>
            <person name="Soderlund C."/>
            <person name="Springer N.M."/>
            <person name="Sun Q."/>
            <person name="Wang H."/>
            <person name="Waterman M."/>
            <person name="Westerman R."/>
            <person name="Wolfgruber T.K."/>
            <person name="Yang L."/>
            <person name="Yu Y."/>
            <person name="Zhang L."/>
            <person name="Zhou S."/>
            <person name="Zhu Q."/>
            <person name="Bennetzen J.L."/>
            <person name="Dawe R.K."/>
            <person name="Jiang J."/>
            <person name="Jiang N."/>
            <person name="Presting G.G."/>
            <person name="Wessler S.R."/>
            <person name="Aluru S."/>
            <person name="Martienssen R.A."/>
            <person name="Clifton S.W."/>
            <person name="McCombie W.R."/>
            <person name="Wing R.A."/>
            <person name="Wilson R.K."/>
        </authorList>
    </citation>
    <scope>NUCLEOTIDE SEQUENCE [LARGE SCALE GENOMIC DNA]</scope>
    <source>
        <strain>cv. B73</strain>
    </source>
</reference>
<proteinExistence type="evidence at transcript level"/>
<protein>
    <recommendedName>
        <fullName evidence="6">Probable glutamate carboxypeptidase VP8</fullName>
        <ecNumber evidence="6">3.4.17.21</ecNumber>
    </recommendedName>
    <alternativeName>
        <fullName evidence="5">Protein VIVIPAROUS8</fullName>
    </alternativeName>
    <alternativeName>
        <fullName evidence="5">Protein WIDOW'S PEAK 1</fullName>
    </alternativeName>
</protein>
<gene>
    <name evidence="5" type="primary">VP8</name>
    <name evidence="5" type="synonym">WPK1</name>
    <name evidence="6" type="ORF">Zm00001d034383</name>
</gene>
<dbReference type="EC" id="3.4.17.21" evidence="6"/>
<dbReference type="EMBL" id="EU401893">
    <property type="protein sequence ID" value="ACA62934.1"/>
    <property type="molecule type" value="mRNA"/>
</dbReference>
<dbReference type="RefSeq" id="NP_001120724.1">
    <property type="nucleotide sequence ID" value="NM_001127252.1"/>
</dbReference>
<dbReference type="SMR" id="A0A1D6L709"/>
<dbReference type="FunCoup" id="A0A1D6L709">
    <property type="interactions" value="575"/>
</dbReference>
<dbReference type="STRING" id="4577.A0A1D6L709"/>
<dbReference type="MEROPS" id="M28.007"/>
<dbReference type="GlyCosmos" id="A0A1D6L709">
    <property type="glycosylation" value="4 sites, No reported glycans"/>
</dbReference>
<dbReference type="PaxDb" id="4577-GRMZM2G010353_P01"/>
<dbReference type="EnsemblPlants" id="Zm00001eb060200_T002">
    <property type="protein sequence ID" value="Zm00001eb060200_P002"/>
    <property type="gene ID" value="Zm00001eb060200"/>
</dbReference>
<dbReference type="GeneID" id="100147738"/>
<dbReference type="Gramene" id="Zm00001eb060200_T002">
    <property type="protein sequence ID" value="Zm00001eb060200_P002"/>
    <property type="gene ID" value="Zm00001eb060200"/>
</dbReference>
<dbReference type="KEGG" id="zma:100147738"/>
<dbReference type="eggNOG" id="KOG2195">
    <property type="taxonomic scope" value="Eukaryota"/>
</dbReference>
<dbReference type="InParanoid" id="A0A1D6L709"/>
<dbReference type="OMA" id="YPRKDGR"/>
<dbReference type="OrthoDB" id="5841748at2759"/>
<dbReference type="Proteomes" id="UP000007305">
    <property type="component" value="Chromosome 1"/>
</dbReference>
<dbReference type="ExpressionAtlas" id="A0A1D6L709">
    <property type="expression patterns" value="baseline and differential"/>
</dbReference>
<dbReference type="GO" id="GO:0005886">
    <property type="term" value="C:plasma membrane"/>
    <property type="evidence" value="ECO:0007669"/>
    <property type="project" value="UniProtKB-SubCell"/>
</dbReference>
<dbReference type="GO" id="GO:0004180">
    <property type="term" value="F:carboxypeptidase activity"/>
    <property type="evidence" value="ECO:0000318"/>
    <property type="project" value="GO_Central"/>
</dbReference>
<dbReference type="GO" id="GO:0046872">
    <property type="term" value="F:metal ion binding"/>
    <property type="evidence" value="ECO:0007669"/>
    <property type="project" value="UniProtKB-KW"/>
</dbReference>
<dbReference type="GO" id="GO:0004181">
    <property type="term" value="F:metallocarboxypeptidase activity"/>
    <property type="evidence" value="ECO:0007669"/>
    <property type="project" value="UniProtKB-EC"/>
</dbReference>
<dbReference type="GO" id="GO:0009793">
    <property type="term" value="P:embryo development ending in seed dormancy"/>
    <property type="evidence" value="ECO:0007669"/>
    <property type="project" value="EnsemblPlants"/>
</dbReference>
<dbReference type="GO" id="GO:0009908">
    <property type="term" value="P:flower development"/>
    <property type="evidence" value="ECO:0007669"/>
    <property type="project" value="EnsemblPlants"/>
</dbReference>
<dbReference type="GO" id="GO:0010305">
    <property type="term" value="P:leaf vascular tissue pattern formation"/>
    <property type="evidence" value="ECO:0007669"/>
    <property type="project" value="EnsemblPlants"/>
</dbReference>
<dbReference type="GO" id="GO:0010074">
    <property type="term" value="P:maintenance of meristem identity"/>
    <property type="evidence" value="ECO:0000315"/>
    <property type="project" value="UniProtKB"/>
</dbReference>
<dbReference type="GO" id="GO:0009640">
    <property type="term" value="P:photomorphogenesis"/>
    <property type="evidence" value="ECO:0007669"/>
    <property type="project" value="EnsemblPlants"/>
</dbReference>
<dbReference type="GO" id="GO:0006508">
    <property type="term" value="P:proteolysis"/>
    <property type="evidence" value="ECO:0007669"/>
    <property type="project" value="UniProtKB-KW"/>
</dbReference>
<dbReference type="GO" id="GO:0010080">
    <property type="term" value="P:regulation of floral meristem growth"/>
    <property type="evidence" value="ECO:0007669"/>
    <property type="project" value="EnsemblPlants"/>
</dbReference>
<dbReference type="GO" id="GO:0010081">
    <property type="term" value="P:regulation of inflorescence meristem growth"/>
    <property type="evidence" value="ECO:0007669"/>
    <property type="project" value="EnsemblPlants"/>
</dbReference>
<dbReference type="GO" id="GO:0010082">
    <property type="term" value="P:regulation of root meristem growth"/>
    <property type="evidence" value="ECO:0007669"/>
    <property type="project" value="EnsemblPlants"/>
</dbReference>
<dbReference type="GO" id="GO:2000034">
    <property type="term" value="P:regulation of seed maturation"/>
    <property type="evidence" value="ECO:0000315"/>
    <property type="project" value="UniProtKB"/>
</dbReference>
<dbReference type="CDD" id="cd08022">
    <property type="entry name" value="M28_PSMA_like"/>
    <property type="match status" value="1"/>
</dbReference>
<dbReference type="FunFam" id="1.20.930.40:FF:000001">
    <property type="entry name" value="N-acetylated-alpha-linked acidic dipeptidase 2"/>
    <property type="match status" value="1"/>
</dbReference>
<dbReference type="FunFam" id="3.40.630.10:FF:000164">
    <property type="entry name" value="Os01g0740650 protein"/>
    <property type="match status" value="1"/>
</dbReference>
<dbReference type="FunFam" id="3.50.30.30:FF:000034">
    <property type="entry name" value="Probable glutamate carboxypeptidase VP8"/>
    <property type="match status" value="1"/>
</dbReference>
<dbReference type="Gene3D" id="3.50.30.30">
    <property type="match status" value="1"/>
</dbReference>
<dbReference type="Gene3D" id="1.20.930.40">
    <property type="entry name" value="Transferrin receptor-like, dimerisation domain"/>
    <property type="match status" value="1"/>
</dbReference>
<dbReference type="Gene3D" id="3.40.630.10">
    <property type="entry name" value="Zn peptidases"/>
    <property type="match status" value="1"/>
</dbReference>
<dbReference type="InterPro" id="IPR046450">
    <property type="entry name" value="PA_dom_sf"/>
</dbReference>
<dbReference type="InterPro" id="IPR007484">
    <property type="entry name" value="Peptidase_M28"/>
</dbReference>
<dbReference type="InterPro" id="IPR039373">
    <property type="entry name" value="Peptidase_M28B"/>
</dbReference>
<dbReference type="InterPro" id="IPR007365">
    <property type="entry name" value="TFR-like_dimer_dom"/>
</dbReference>
<dbReference type="InterPro" id="IPR036757">
    <property type="entry name" value="TFR-like_dimer_dom_sf"/>
</dbReference>
<dbReference type="PANTHER" id="PTHR10404:SF75">
    <property type="entry name" value="GLUTAMATE CARBOXYPEPTIDASE AMP1-RELATED"/>
    <property type="match status" value="1"/>
</dbReference>
<dbReference type="PANTHER" id="PTHR10404">
    <property type="entry name" value="N-ACETYLATED-ALPHA-LINKED ACIDIC DIPEPTIDASE"/>
    <property type="match status" value="1"/>
</dbReference>
<dbReference type="Pfam" id="PF04389">
    <property type="entry name" value="Peptidase_M28"/>
    <property type="match status" value="1"/>
</dbReference>
<dbReference type="Pfam" id="PF04253">
    <property type="entry name" value="TFR_dimer"/>
    <property type="match status" value="1"/>
</dbReference>
<dbReference type="SUPFAM" id="SSF52025">
    <property type="entry name" value="PA domain"/>
    <property type="match status" value="1"/>
</dbReference>
<dbReference type="SUPFAM" id="SSF47672">
    <property type="entry name" value="Transferrin receptor-like dimerisation domain"/>
    <property type="match status" value="1"/>
</dbReference>
<dbReference type="SUPFAM" id="SSF53187">
    <property type="entry name" value="Zn-dependent exopeptidases"/>
    <property type="match status" value="1"/>
</dbReference>
<accession>A0A1D6L709</accession>
<accession>B1PDK9</accession>
<evidence type="ECO:0000250" key="1">
    <source>
        <dbReference type="UniProtKB" id="Q04609"/>
    </source>
</evidence>
<evidence type="ECO:0000255" key="2"/>
<evidence type="ECO:0000255" key="3">
    <source>
        <dbReference type="PROSITE-ProRule" id="PRU00498"/>
    </source>
</evidence>
<evidence type="ECO:0000269" key="4">
    <source>
    </source>
</evidence>
<evidence type="ECO:0000303" key="5">
    <source>
    </source>
</evidence>
<evidence type="ECO:0000305" key="6"/>